<proteinExistence type="evidence at protein level"/>
<feature type="chain" id="PRO_0000336077" description="Coordinator of PRMT5 and differentiation stimulator">
    <location>
        <begin position="1"/>
        <end position="184"/>
    </location>
</feature>
<feature type="region of interest" description="Disordered" evidence="3">
    <location>
        <begin position="1"/>
        <end position="136"/>
    </location>
</feature>
<feature type="compositionally biased region" description="Low complexity" evidence="3">
    <location>
        <begin position="1"/>
        <end position="14"/>
    </location>
</feature>
<feature type="compositionally biased region" description="Basic and acidic residues" evidence="3">
    <location>
        <begin position="42"/>
        <end position="56"/>
    </location>
</feature>
<feature type="compositionally biased region" description="Acidic residues" evidence="3">
    <location>
        <begin position="78"/>
        <end position="89"/>
    </location>
</feature>
<feature type="modified residue" description="N-acetylmethionine" evidence="8 9">
    <location>
        <position position="1"/>
    </location>
</feature>
<feature type="modified residue" description="Phosphoserine" evidence="10">
    <location>
        <position position="66"/>
    </location>
</feature>
<feature type="modified residue" description="Phosphoserine" evidence="2">
    <location>
        <position position="75"/>
    </location>
</feature>
<feature type="sequence variant" id="VAR_043538" description="In dbSNP:rs8068049." evidence="4 5 7">
    <original>S</original>
    <variation>G</variation>
    <location>
        <position position="43"/>
    </location>
</feature>
<accession>Q9NQ92</accession>
<accession>A6NP14</accession>
<accession>E1P656</accession>
<accession>Q96EF5</accession>
<accession>Q96P75</accession>
<comment type="function">
    <text evidence="1 6">Histone-binding protein required for histone H4 methyltransferase activity of PRMT5. Specifically required for histone H4 'Arg-3' methylation mediated by PRMT5, but not histone H3 'Arg-8' methylation, suggesting that it modulates the substrate specificity of PRMT5. Specifically interacts with the N-terminus of histone H4 but not with histone H3, suggesting that it acts by promoting the association between histone H4 and PRMT5. Involved in CCNE1 promoter repression. Plays a role in muscle cell differentiation by modulating the recruitment of PRMT5 to the promoter of genes involved in the coordination between cell cycle exit and muscle differentiation (By similarity).</text>
</comment>
<comment type="subunit">
    <text evidence="1">Interacts with PRMT5. Interacts with histone H4; specifically interacts with the N-terminus of histone H4 but not with histone H3. Interacts with CBFB (By similarity). Found in a complex with PRMT5, RUNX1 and CBFB (By similarity).</text>
</comment>
<comment type="interaction">
    <interactant intactId="EBI-1642558">
        <id>Q9NQ92</id>
    </interactant>
    <interactant intactId="EBI-302023">
        <id>P62805</id>
        <label>H4C9</label>
    </interactant>
    <organismsDiffer>false</organismsDiffer>
    <experiments>3</experiments>
</comment>
<comment type="interaction">
    <interactant intactId="EBI-1642558">
        <id>Q9NQ92</id>
    </interactant>
    <interactant intactId="EBI-351098">
        <id>O14744</id>
        <label>PRMT5</label>
    </interactant>
    <organismsDiffer>false</organismsDiffer>
    <experiments>7</experiments>
</comment>
<comment type="subcellular location">
    <subcellularLocation>
        <location evidence="6">Nucleus</location>
    </subcellularLocation>
</comment>
<protein>
    <recommendedName>
        <fullName>Coordinator of PRMT5 and differentiation stimulator</fullName>
    </recommendedName>
    <alternativeName>
        <fullName>Cooperator of PRMT5</fullName>
    </alternativeName>
    <alternativeName>
        <fullName>Protein TTP1</fullName>
    </alternativeName>
</protein>
<gene>
    <name type="primary">COPRS</name>
    <name type="synonym">C17orf79</name>
    <name type="synonym">COPR5</name>
</gene>
<organism>
    <name type="scientific">Homo sapiens</name>
    <name type="common">Human</name>
    <dbReference type="NCBI Taxonomy" id="9606"/>
    <lineage>
        <taxon>Eukaryota</taxon>
        <taxon>Metazoa</taxon>
        <taxon>Chordata</taxon>
        <taxon>Craniata</taxon>
        <taxon>Vertebrata</taxon>
        <taxon>Euteleostomi</taxon>
        <taxon>Mammalia</taxon>
        <taxon>Eutheria</taxon>
        <taxon>Euarchontoglires</taxon>
        <taxon>Primates</taxon>
        <taxon>Haplorrhini</taxon>
        <taxon>Catarrhini</taxon>
        <taxon>Hominidae</taxon>
        <taxon>Homo</taxon>
    </lineage>
</organism>
<dbReference type="EMBL" id="AJ272196">
    <property type="protein sequence ID" value="CAB77267.2"/>
    <property type="molecule type" value="mRNA"/>
</dbReference>
<dbReference type="EMBL" id="AF407672">
    <property type="protein sequence ID" value="AAK97661.1"/>
    <property type="molecule type" value="mRNA"/>
</dbReference>
<dbReference type="EMBL" id="AC004253">
    <property type="status" value="NOT_ANNOTATED_CDS"/>
    <property type="molecule type" value="Genomic_DNA"/>
</dbReference>
<dbReference type="EMBL" id="CH471147">
    <property type="protein sequence ID" value="EAW80262.1"/>
    <property type="molecule type" value="Genomic_DNA"/>
</dbReference>
<dbReference type="EMBL" id="CH471147">
    <property type="protein sequence ID" value="EAW80263.1"/>
    <property type="molecule type" value="Genomic_DNA"/>
</dbReference>
<dbReference type="EMBL" id="BC012386">
    <property type="protein sequence ID" value="AAH12386.1"/>
    <property type="molecule type" value="mRNA"/>
</dbReference>
<dbReference type="CCDS" id="CCDS11268.1"/>
<dbReference type="RefSeq" id="NP_060875.2">
    <property type="nucleotide sequence ID" value="NM_018405.4"/>
</dbReference>
<dbReference type="BioGRID" id="120632">
    <property type="interactions" value="79"/>
</dbReference>
<dbReference type="ComplexPortal" id="CPX-8149">
    <property type="entry name" value="PRMT5 methylosome complex, COPR5 variant"/>
</dbReference>
<dbReference type="CORUM" id="Q9NQ92"/>
<dbReference type="FunCoup" id="Q9NQ92">
    <property type="interactions" value="1085"/>
</dbReference>
<dbReference type="IntAct" id="Q9NQ92">
    <property type="interactions" value="57"/>
</dbReference>
<dbReference type="MINT" id="Q9NQ92"/>
<dbReference type="STRING" id="9606.ENSP00000304327"/>
<dbReference type="GlyGen" id="Q9NQ92">
    <property type="glycosylation" value="1 site, 1 O-linked glycan (1 site)"/>
</dbReference>
<dbReference type="iPTMnet" id="Q9NQ92"/>
<dbReference type="PhosphoSitePlus" id="Q9NQ92"/>
<dbReference type="BioMuta" id="COPRS"/>
<dbReference type="DMDM" id="189082907"/>
<dbReference type="jPOST" id="Q9NQ92"/>
<dbReference type="MassIVE" id="Q9NQ92"/>
<dbReference type="PaxDb" id="9606-ENSP00000304327"/>
<dbReference type="PeptideAtlas" id="Q9NQ92"/>
<dbReference type="ProteomicsDB" id="82111"/>
<dbReference type="Pumba" id="Q9NQ92"/>
<dbReference type="Antibodypedia" id="65565">
    <property type="antibodies" value="5 antibodies from 5 providers"/>
</dbReference>
<dbReference type="DNASU" id="55352"/>
<dbReference type="Ensembl" id="ENST00000302362.11">
    <property type="protein sequence ID" value="ENSP00000304327.6"/>
    <property type="gene ID" value="ENSG00000172301.11"/>
</dbReference>
<dbReference type="GeneID" id="55352"/>
<dbReference type="KEGG" id="hsa:55352"/>
<dbReference type="MANE-Select" id="ENST00000302362.11">
    <property type="protein sequence ID" value="ENSP00000304327.6"/>
    <property type="RefSeq nucleotide sequence ID" value="NM_018405.4"/>
    <property type="RefSeq protein sequence ID" value="NP_060875.2"/>
</dbReference>
<dbReference type="UCSC" id="uc002hgp.4">
    <property type="organism name" value="human"/>
</dbReference>
<dbReference type="AGR" id="HGNC:28848"/>
<dbReference type="CTD" id="55352"/>
<dbReference type="DisGeNET" id="55352"/>
<dbReference type="GeneCards" id="COPRS"/>
<dbReference type="HGNC" id="HGNC:28848">
    <property type="gene designation" value="COPRS"/>
</dbReference>
<dbReference type="HPA" id="ENSG00000172301">
    <property type="expression patterns" value="Low tissue specificity"/>
</dbReference>
<dbReference type="neXtProt" id="NX_Q9NQ92"/>
<dbReference type="OpenTargets" id="ENSG00000172301"/>
<dbReference type="PharmGKB" id="PA143485403"/>
<dbReference type="VEuPathDB" id="HostDB:ENSG00000172301"/>
<dbReference type="eggNOG" id="ENOG502ST7I">
    <property type="taxonomic scope" value="Eukaryota"/>
</dbReference>
<dbReference type="GeneTree" id="ENSGT00390000007384"/>
<dbReference type="HOGENOM" id="CLU_126074_0_0_1"/>
<dbReference type="InParanoid" id="Q9NQ92"/>
<dbReference type="OMA" id="IPTHGED"/>
<dbReference type="OrthoDB" id="9451728at2759"/>
<dbReference type="PAN-GO" id="Q9NQ92">
    <property type="GO annotations" value="3 GO annotations based on evolutionary models"/>
</dbReference>
<dbReference type="PhylomeDB" id="Q9NQ92"/>
<dbReference type="TreeFam" id="TF338109"/>
<dbReference type="PathwayCommons" id="Q9NQ92"/>
<dbReference type="Reactome" id="R-HSA-3214858">
    <property type="pathway name" value="RMTs methylate histone arginines"/>
</dbReference>
<dbReference type="SignaLink" id="Q9NQ92"/>
<dbReference type="BioGRID-ORCS" id="55352">
    <property type="hits" value="19 hits in 1158 CRISPR screens"/>
</dbReference>
<dbReference type="ChiTaRS" id="COPRS">
    <property type="organism name" value="human"/>
</dbReference>
<dbReference type="GenomeRNAi" id="55352"/>
<dbReference type="Pharos" id="Q9NQ92">
    <property type="development level" value="Tbio"/>
</dbReference>
<dbReference type="PRO" id="PR:Q9NQ92"/>
<dbReference type="Proteomes" id="UP000005640">
    <property type="component" value="Chromosome 17"/>
</dbReference>
<dbReference type="RNAct" id="Q9NQ92">
    <property type="molecule type" value="protein"/>
</dbReference>
<dbReference type="Bgee" id="ENSG00000172301">
    <property type="expression patterns" value="Expressed in left testis and 183 other cell types or tissues"/>
</dbReference>
<dbReference type="ExpressionAtlas" id="Q9NQ92">
    <property type="expression patterns" value="baseline and differential"/>
</dbReference>
<dbReference type="GO" id="GO:0005829">
    <property type="term" value="C:cytosol"/>
    <property type="evidence" value="ECO:0000314"/>
    <property type="project" value="HPA"/>
</dbReference>
<dbReference type="GO" id="GO:0005654">
    <property type="term" value="C:nucleoplasm"/>
    <property type="evidence" value="ECO:0000314"/>
    <property type="project" value="HPA"/>
</dbReference>
<dbReference type="GO" id="GO:0005634">
    <property type="term" value="C:nucleus"/>
    <property type="evidence" value="ECO:0000314"/>
    <property type="project" value="UniProtKB"/>
</dbReference>
<dbReference type="GO" id="GO:0005886">
    <property type="term" value="C:plasma membrane"/>
    <property type="evidence" value="ECO:0000314"/>
    <property type="project" value="HPA"/>
</dbReference>
<dbReference type="GO" id="GO:0042393">
    <property type="term" value="F:histone binding"/>
    <property type="evidence" value="ECO:0000314"/>
    <property type="project" value="UniProtKB"/>
</dbReference>
<dbReference type="GO" id="GO:0006338">
    <property type="term" value="P:chromatin remodeling"/>
    <property type="evidence" value="ECO:0000314"/>
    <property type="project" value="UniProtKB"/>
</dbReference>
<dbReference type="GO" id="GO:0007517">
    <property type="term" value="P:muscle organ development"/>
    <property type="evidence" value="ECO:0000250"/>
    <property type="project" value="UniProtKB"/>
</dbReference>
<dbReference type="InterPro" id="IPR029289">
    <property type="entry name" value="COPR5"/>
</dbReference>
<dbReference type="PANTHER" id="PTHR36461">
    <property type="entry name" value="COORDINATOR OF PRMT5 AND DIFFERENTIATION STIMULATOR"/>
    <property type="match status" value="1"/>
</dbReference>
<dbReference type="PANTHER" id="PTHR36461:SF1">
    <property type="entry name" value="COORDINATOR OF PRMT5 AND DIFFERENTIATION STIMULATOR"/>
    <property type="match status" value="1"/>
</dbReference>
<dbReference type="Pfam" id="PF15340">
    <property type="entry name" value="COPR5"/>
    <property type="match status" value="1"/>
</dbReference>
<sequence length="184" mass="20066">MDLQAAGAQAQGAAEPSRGPPLPSARGAPPSPEAGFATADHSSQERETEKAMDRLARGTQSIPNDSPARGEGTHSEEEGFAMDEEDSDGELNTWELSEGTNCPPKEQPGDLFNEDWDSELKADQGNPYDADDIQESISQELKPWVCCAPQGDMIYDPSWHHPPPLIPYYSKMVFETGQFDDAED</sequence>
<name>COPRS_HUMAN</name>
<evidence type="ECO:0000250" key="1"/>
<evidence type="ECO:0000250" key="2">
    <source>
        <dbReference type="UniProtKB" id="Q9CQ13"/>
    </source>
</evidence>
<evidence type="ECO:0000256" key="3">
    <source>
        <dbReference type="SAM" id="MobiDB-lite"/>
    </source>
</evidence>
<evidence type="ECO:0000269" key="4">
    <source>
    </source>
</evidence>
<evidence type="ECO:0000269" key="5">
    <source>
    </source>
</evidence>
<evidence type="ECO:0000269" key="6">
    <source>
    </source>
</evidence>
<evidence type="ECO:0000269" key="7">
    <source ref="4"/>
</evidence>
<evidence type="ECO:0000269" key="8">
    <source ref="6"/>
</evidence>
<evidence type="ECO:0007744" key="9">
    <source>
    </source>
</evidence>
<evidence type="ECO:0007744" key="10">
    <source>
    </source>
</evidence>
<reference key="1">
    <citation type="journal article" date="2000" name="Genomics">
        <title>A common set of at least 11 functional genes is lost in the majority of NF1 patients with gross deletions.</title>
        <authorList>
            <person name="Jenne D.E."/>
            <person name="Tinschert S."/>
            <person name="Stegmann E."/>
            <person name="Reimann H."/>
            <person name="Nuernberg P."/>
            <person name="Horn D."/>
            <person name="Naumann I."/>
            <person name="Buske A."/>
            <person name="Thiel G."/>
        </authorList>
    </citation>
    <scope>NUCLEOTIDE SEQUENCE [MRNA]</scope>
    <scope>VARIANT GLY-43</scope>
</reference>
<reference key="2">
    <citation type="submission" date="2001-08" db="EMBL/GenBank/DDBJ databases">
        <title>Suppression subtractive hybridization for cloning of gene 1 transactivated by C-terminally truncated middle surface protein of hepatitis B virus.</title>
        <authorList>
            <person name="Liu Y."/>
            <person name="Cheng J."/>
            <person name="Zhang Y."/>
            <person name="Duan H."/>
            <person name="Mou J."/>
            <person name="Han P."/>
            <person name="Li K."/>
        </authorList>
    </citation>
    <scope>NUCLEOTIDE SEQUENCE [MRNA]</scope>
</reference>
<reference key="3">
    <citation type="journal article" date="2006" name="Nature">
        <title>DNA sequence of human chromosome 17 and analysis of rearrangement in the human lineage.</title>
        <authorList>
            <person name="Zody M.C."/>
            <person name="Garber M."/>
            <person name="Adams D.J."/>
            <person name="Sharpe T."/>
            <person name="Harrow J."/>
            <person name="Lupski J.R."/>
            <person name="Nicholson C."/>
            <person name="Searle S.M."/>
            <person name="Wilming L."/>
            <person name="Young S.K."/>
            <person name="Abouelleil A."/>
            <person name="Allen N.R."/>
            <person name="Bi W."/>
            <person name="Bloom T."/>
            <person name="Borowsky M.L."/>
            <person name="Bugalter B.E."/>
            <person name="Butler J."/>
            <person name="Chang J.L."/>
            <person name="Chen C.-K."/>
            <person name="Cook A."/>
            <person name="Corum B."/>
            <person name="Cuomo C.A."/>
            <person name="de Jong P.J."/>
            <person name="DeCaprio D."/>
            <person name="Dewar K."/>
            <person name="FitzGerald M."/>
            <person name="Gilbert J."/>
            <person name="Gibson R."/>
            <person name="Gnerre S."/>
            <person name="Goldstein S."/>
            <person name="Grafham D.V."/>
            <person name="Grocock R."/>
            <person name="Hafez N."/>
            <person name="Hagopian D.S."/>
            <person name="Hart E."/>
            <person name="Norman C.H."/>
            <person name="Humphray S."/>
            <person name="Jaffe D.B."/>
            <person name="Jones M."/>
            <person name="Kamal M."/>
            <person name="Khodiyar V.K."/>
            <person name="LaButti K."/>
            <person name="Laird G."/>
            <person name="Lehoczky J."/>
            <person name="Liu X."/>
            <person name="Lokyitsang T."/>
            <person name="Loveland J."/>
            <person name="Lui A."/>
            <person name="Macdonald P."/>
            <person name="Major J.E."/>
            <person name="Matthews L."/>
            <person name="Mauceli E."/>
            <person name="McCarroll S.A."/>
            <person name="Mihalev A.H."/>
            <person name="Mudge J."/>
            <person name="Nguyen C."/>
            <person name="Nicol R."/>
            <person name="O'Leary S.B."/>
            <person name="Osoegawa K."/>
            <person name="Schwartz D.C."/>
            <person name="Shaw-Smith C."/>
            <person name="Stankiewicz P."/>
            <person name="Steward C."/>
            <person name="Swarbreck D."/>
            <person name="Venkataraman V."/>
            <person name="Whittaker C.A."/>
            <person name="Yang X."/>
            <person name="Zimmer A.R."/>
            <person name="Bradley A."/>
            <person name="Hubbard T."/>
            <person name="Birren B.W."/>
            <person name="Rogers J."/>
            <person name="Lander E.S."/>
            <person name="Nusbaum C."/>
        </authorList>
    </citation>
    <scope>NUCLEOTIDE SEQUENCE [LARGE SCALE GENOMIC DNA]</scope>
</reference>
<reference key="4">
    <citation type="submission" date="2005-09" db="EMBL/GenBank/DDBJ databases">
        <authorList>
            <person name="Mural R.J."/>
            <person name="Istrail S."/>
            <person name="Sutton G.G."/>
            <person name="Florea L."/>
            <person name="Halpern A.L."/>
            <person name="Mobarry C.M."/>
            <person name="Lippert R."/>
            <person name="Walenz B."/>
            <person name="Shatkay H."/>
            <person name="Dew I."/>
            <person name="Miller J.R."/>
            <person name="Flanigan M.J."/>
            <person name="Edwards N.J."/>
            <person name="Bolanos R."/>
            <person name="Fasulo D."/>
            <person name="Halldorsson B.V."/>
            <person name="Hannenhalli S."/>
            <person name="Turner R."/>
            <person name="Yooseph S."/>
            <person name="Lu F."/>
            <person name="Nusskern D.R."/>
            <person name="Shue B.C."/>
            <person name="Zheng X.H."/>
            <person name="Zhong F."/>
            <person name="Delcher A.L."/>
            <person name="Huson D.H."/>
            <person name="Kravitz S.A."/>
            <person name="Mouchard L."/>
            <person name="Reinert K."/>
            <person name="Remington K.A."/>
            <person name="Clark A.G."/>
            <person name="Waterman M.S."/>
            <person name="Eichler E.E."/>
            <person name="Adams M.D."/>
            <person name="Hunkapiller M.W."/>
            <person name="Myers E.W."/>
            <person name="Venter J.C."/>
        </authorList>
    </citation>
    <scope>NUCLEOTIDE SEQUENCE [LARGE SCALE GENOMIC DNA]</scope>
    <scope>VARIANT GLY-43</scope>
</reference>
<reference key="5">
    <citation type="journal article" date="2004" name="Genome Res.">
        <title>The status, quality, and expansion of the NIH full-length cDNA project: the Mammalian Gene Collection (MGC).</title>
        <authorList>
            <consortium name="The MGC Project Team"/>
        </authorList>
    </citation>
    <scope>NUCLEOTIDE SEQUENCE [LARGE SCALE MRNA]</scope>
    <scope>VARIANT GLY-43</scope>
    <source>
        <tissue>Lung</tissue>
    </source>
</reference>
<reference key="6">
    <citation type="submission" date="2007-07" db="UniProtKB">
        <authorList>
            <person name="Bienvenut W.V."/>
            <person name="Matallanas D."/>
            <person name="Cooper W.N."/>
            <person name="Kolch W."/>
        </authorList>
    </citation>
    <scope>PROTEIN SEQUENCE OF 1-26 AND 58-69</scope>
    <scope>ACETYLATION AT MET-1</scope>
    <scope>IDENTIFICATION BY MASS SPECTROMETRY</scope>
    <source>
        <tissue>Mammary carcinoma</tissue>
    </source>
</reference>
<reference key="7">
    <citation type="journal article" date="2008" name="EMBO Rep.">
        <title>The histone-binding protein COPR5 is required for nuclear functions of the protein arginine methyltransferase PRMT5.</title>
        <authorList>
            <person name="Lacroix M."/>
            <person name="Messaoudi S.E."/>
            <person name="Rodier G."/>
            <person name="Le Cam A."/>
            <person name="Sardet C."/>
            <person name="Fabbrizio E."/>
        </authorList>
    </citation>
    <scope>FUNCTION</scope>
    <scope>SUBCELLULAR LOCATION</scope>
    <scope>INTERACTION WITH PRMT5 AND HISTONE H4</scope>
</reference>
<reference key="8">
    <citation type="journal article" date="2012" name="Proc. Natl. Acad. Sci. U.S.A.">
        <title>N-terminal acetylome analyses and functional insights of the N-terminal acetyltransferase NatB.</title>
        <authorList>
            <person name="Van Damme P."/>
            <person name="Lasa M."/>
            <person name="Polevoda B."/>
            <person name="Gazquez C."/>
            <person name="Elosegui-Artola A."/>
            <person name="Kim D.S."/>
            <person name="De Juan-Pardo E."/>
            <person name="Demeyer K."/>
            <person name="Hole K."/>
            <person name="Larrea E."/>
            <person name="Timmerman E."/>
            <person name="Prieto J."/>
            <person name="Arnesen T."/>
            <person name="Sherman F."/>
            <person name="Gevaert K."/>
            <person name="Aldabe R."/>
        </authorList>
    </citation>
    <scope>ACETYLATION [LARGE SCALE ANALYSIS] AT MET-1</scope>
    <scope>IDENTIFICATION BY MASS SPECTROMETRY [LARGE SCALE ANALYSIS]</scope>
</reference>
<reference key="9">
    <citation type="journal article" date="2013" name="J. Proteome Res.">
        <title>Toward a comprehensive characterization of a human cancer cell phosphoproteome.</title>
        <authorList>
            <person name="Zhou H."/>
            <person name="Di Palma S."/>
            <person name="Preisinger C."/>
            <person name="Peng M."/>
            <person name="Polat A.N."/>
            <person name="Heck A.J."/>
            <person name="Mohammed S."/>
        </authorList>
    </citation>
    <scope>PHOSPHORYLATION [LARGE SCALE ANALYSIS] AT SER-66</scope>
    <scope>IDENTIFICATION BY MASS SPECTROMETRY [LARGE SCALE ANALYSIS]</scope>
    <source>
        <tissue>Cervix carcinoma</tissue>
    </source>
</reference>
<keyword id="KW-0007">Acetylation</keyword>
<keyword id="KW-0156">Chromatin regulator</keyword>
<keyword id="KW-0903">Direct protein sequencing</keyword>
<keyword id="KW-0517">Myogenesis</keyword>
<keyword id="KW-0539">Nucleus</keyword>
<keyword id="KW-0597">Phosphoprotein</keyword>
<keyword id="KW-1267">Proteomics identification</keyword>
<keyword id="KW-1185">Reference proteome</keyword>
<keyword id="KW-0804">Transcription</keyword>
<keyword id="KW-0805">Transcription regulation</keyword>